<reference key="1">
    <citation type="journal article" date="1996" name="J. Biol. Chem.">
        <title>The OST4 gene of Saccharomyces cerevisiae encodes an unusually small protein required for normal levels of oligosaccharyltransferase activity.</title>
        <authorList>
            <person name="Chi J.H."/>
            <person name="Roos J."/>
            <person name="Dean N."/>
        </authorList>
    </citation>
    <scope>NUCLEOTIDE SEQUENCE [GENOMIC DNA]</scope>
    <source>
        <strain>NDY21</strain>
    </source>
</reference>
<reference key="2">
    <citation type="journal article" date="1997" name="Nature">
        <title>The nucleotide sequence of Saccharomyces cerevisiae chromosome IV.</title>
        <authorList>
            <person name="Jacq C."/>
            <person name="Alt-Moerbe J."/>
            <person name="Andre B."/>
            <person name="Arnold W."/>
            <person name="Bahr A."/>
            <person name="Ballesta J.P.G."/>
            <person name="Bargues M."/>
            <person name="Baron L."/>
            <person name="Becker A."/>
            <person name="Biteau N."/>
            <person name="Bloecker H."/>
            <person name="Blugeon C."/>
            <person name="Boskovic J."/>
            <person name="Brandt P."/>
            <person name="Brueckner M."/>
            <person name="Buitrago M.J."/>
            <person name="Coster F."/>
            <person name="Delaveau T."/>
            <person name="del Rey F."/>
            <person name="Dujon B."/>
            <person name="Eide L.G."/>
            <person name="Garcia-Cantalejo J.M."/>
            <person name="Goffeau A."/>
            <person name="Gomez-Peris A."/>
            <person name="Granotier C."/>
            <person name="Hanemann V."/>
            <person name="Hankeln T."/>
            <person name="Hoheisel J.D."/>
            <person name="Jaeger W."/>
            <person name="Jimenez A."/>
            <person name="Jonniaux J.-L."/>
            <person name="Kraemer C."/>
            <person name="Kuester H."/>
            <person name="Laamanen P."/>
            <person name="Legros Y."/>
            <person name="Louis E.J."/>
            <person name="Moeller-Rieker S."/>
            <person name="Monnet A."/>
            <person name="Moro M."/>
            <person name="Mueller-Auer S."/>
            <person name="Nussbaumer B."/>
            <person name="Paricio N."/>
            <person name="Paulin L."/>
            <person name="Perea J."/>
            <person name="Perez-Alonso M."/>
            <person name="Perez-Ortin J.E."/>
            <person name="Pohl T.M."/>
            <person name="Prydz H."/>
            <person name="Purnelle B."/>
            <person name="Rasmussen S.W."/>
            <person name="Remacha M.A."/>
            <person name="Revuelta J.L."/>
            <person name="Rieger M."/>
            <person name="Salom D."/>
            <person name="Saluz H.P."/>
            <person name="Saiz J.E."/>
            <person name="Saren A.-M."/>
            <person name="Schaefer M."/>
            <person name="Scharfe M."/>
            <person name="Schmidt E.R."/>
            <person name="Schneider C."/>
            <person name="Scholler P."/>
            <person name="Schwarz S."/>
            <person name="Soler-Mira A."/>
            <person name="Urrestarazu L.A."/>
            <person name="Verhasselt P."/>
            <person name="Vissers S."/>
            <person name="Voet M."/>
            <person name="Volckaert G."/>
            <person name="Wagner G."/>
            <person name="Wambutt R."/>
            <person name="Wedler E."/>
            <person name="Wedler H."/>
            <person name="Woelfl S."/>
            <person name="Harris D.E."/>
            <person name="Bowman S."/>
            <person name="Brown D."/>
            <person name="Churcher C.M."/>
            <person name="Connor R."/>
            <person name="Dedman K."/>
            <person name="Gentles S."/>
            <person name="Hamlin N."/>
            <person name="Hunt S."/>
            <person name="Jones L."/>
            <person name="McDonald S."/>
            <person name="Murphy L.D."/>
            <person name="Niblett D."/>
            <person name="Odell C."/>
            <person name="Oliver K."/>
            <person name="Rajandream M.A."/>
            <person name="Richards C."/>
            <person name="Shore L."/>
            <person name="Walsh S.V."/>
            <person name="Barrell B.G."/>
            <person name="Dietrich F.S."/>
            <person name="Mulligan J.T."/>
            <person name="Allen E."/>
            <person name="Araujo R."/>
            <person name="Aviles E."/>
            <person name="Berno A."/>
            <person name="Carpenter J."/>
            <person name="Chen E."/>
            <person name="Cherry J.M."/>
            <person name="Chung E."/>
            <person name="Duncan M."/>
            <person name="Hunicke-Smith S."/>
            <person name="Hyman R.W."/>
            <person name="Komp C."/>
            <person name="Lashkari D."/>
            <person name="Lew H."/>
            <person name="Lin D."/>
            <person name="Mosedale D."/>
            <person name="Nakahara K."/>
            <person name="Namath A."/>
            <person name="Oefner P."/>
            <person name="Oh C."/>
            <person name="Petel F.X."/>
            <person name="Roberts D."/>
            <person name="Schramm S."/>
            <person name="Schroeder M."/>
            <person name="Shogren T."/>
            <person name="Shroff N."/>
            <person name="Winant A."/>
            <person name="Yelton M.A."/>
            <person name="Botstein D."/>
            <person name="Davis R.W."/>
            <person name="Johnston M."/>
            <person name="Andrews S."/>
            <person name="Brinkman R."/>
            <person name="Cooper J."/>
            <person name="Ding H."/>
            <person name="Du Z."/>
            <person name="Favello A."/>
            <person name="Fulton L."/>
            <person name="Gattung S."/>
            <person name="Greco T."/>
            <person name="Hallsworth K."/>
            <person name="Hawkins J."/>
            <person name="Hillier L.W."/>
            <person name="Jier M."/>
            <person name="Johnson D."/>
            <person name="Johnston L."/>
            <person name="Kirsten J."/>
            <person name="Kucaba T."/>
            <person name="Langston Y."/>
            <person name="Latreille P."/>
            <person name="Le T."/>
            <person name="Mardis E."/>
            <person name="Menezes S."/>
            <person name="Miller N."/>
            <person name="Nhan M."/>
            <person name="Pauley A."/>
            <person name="Peluso D."/>
            <person name="Rifkin L."/>
            <person name="Riles L."/>
            <person name="Taich A."/>
            <person name="Trevaskis E."/>
            <person name="Vignati D."/>
            <person name="Wilcox L."/>
            <person name="Wohldman P."/>
            <person name="Vaudin M."/>
            <person name="Wilson R."/>
            <person name="Waterston R."/>
            <person name="Albermann K."/>
            <person name="Hani J."/>
            <person name="Heumann K."/>
            <person name="Kleine K."/>
            <person name="Mewes H.-W."/>
            <person name="Zollner A."/>
            <person name="Zaccaria P."/>
        </authorList>
    </citation>
    <scope>NUCLEOTIDE SEQUENCE [LARGE SCALE GENOMIC DNA]</scope>
    <source>
        <strain>ATCC 204508 / S288c</strain>
    </source>
</reference>
<reference key="3">
    <citation type="journal article" date="2014" name="G3 (Bethesda)">
        <title>The reference genome sequence of Saccharomyces cerevisiae: Then and now.</title>
        <authorList>
            <person name="Engel S.R."/>
            <person name="Dietrich F.S."/>
            <person name="Fisk D.G."/>
            <person name="Binkley G."/>
            <person name="Balakrishnan R."/>
            <person name="Costanzo M.C."/>
            <person name="Dwight S.S."/>
            <person name="Hitz B.C."/>
            <person name="Karra K."/>
            <person name="Nash R.S."/>
            <person name="Weng S."/>
            <person name="Wong E.D."/>
            <person name="Lloyd P."/>
            <person name="Skrzypek M.S."/>
            <person name="Miyasato S.R."/>
            <person name="Simison M."/>
            <person name="Cherry J.M."/>
        </authorList>
    </citation>
    <scope>GENOME REANNOTATION</scope>
    <source>
        <strain>ATCC 204508 / S288c</strain>
    </source>
</reference>
<reference key="4">
    <citation type="journal article" date="1994" name="J. Biol. Chem.">
        <title>The Saccharomyces cerevisiae oligosaccharyltransferase is a protein complex composed of Wbp1p, Swp1p, and four additional polypeptides.</title>
        <authorList>
            <person name="Kelleher D.J."/>
            <person name="Gilmore R."/>
        </authorList>
    </citation>
    <scope>IDENTIFICATION IN THE OLIGOSACCHARYL TRANSFERASE COMPLEX</scope>
</reference>
<reference key="5">
    <citation type="journal article" date="1997" name="J. Biol. Chem.">
        <title>The highly conserved Stt3 protein is a subunit of the yeast oligosaccharyltransferase and forms a subcomplex with Ost3p and Ost4p.</title>
        <authorList>
            <person name="Karaoglu D."/>
            <person name="Kelleher D.J."/>
            <person name="Gilmore R."/>
        </authorList>
    </citation>
    <scope>IDENTIFICATION IN THE OLIGOSACCHARYL TRANSFERASE COMPLEX</scope>
    <scope>INTERACTION WITH OST3 AND STT3</scope>
</reference>
<reference key="6">
    <citation type="journal article" date="1999" name="Biochim. Biophys. Acta">
        <title>The oligosaccharyltransferase complex from yeast.</title>
        <authorList>
            <person name="Knauer R."/>
            <person name="Lehle L."/>
        </authorList>
    </citation>
    <scope>REVIEW ON OLIGOSACCHARYL TRANSFERASE</scope>
</reference>
<reference key="7">
    <citation type="journal article" date="2000" name="Proc. Natl. Acad. Sci. U.S.A.">
        <title>Studies on the role of the hydrophobic domain of Ost4p in interactions with other subunits of yeast oligosaccharyl transferase.</title>
        <authorList>
            <person name="Kim H."/>
            <person name="Park H."/>
            <person name="Montalvo L."/>
            <person name="Lennarz W.J."/>
        </authorList>
    </citation>
    <scope>INTERACTION WITH OST3 AND STT3</scope>
    <scope>MUTAGENESIS OF MET-18; MET-19; THR-20; LEU-21; VAL-23; ILE-24 AND TYR-25</scope>
</reference>
<reference key="8">
    <citation type="journal article" date="2001" name="Biochemistry">
        <title>Allosteric regulation provides a molecular mechanism for preferential utilization of the fully assembled dolichol-linked oligosaccharide by the yeast oligosaccharyltransferase.</title>
        <authorList>
            <person name="Karaoglu D."/>
            <person name="Kelleher D.J."/>
            <person name="Gilmore R."/>
        </authorList>
    </citation>
    <scope>FUNCTION</scope>
</reference>
<reference key="9">
    <citation type="journal article" date="2003" name="Nature">
        <title>Global analysis of protein localization in budding yeast.</title>
        <authorList>
            <person name="Huh W.-K."/>
            <person name="Falvo J.V."/>
            <person name="Gerke L.C."/>
            <person name="Carroll A.S."/>
            <person name="Howson R.W."/>
            <person name="Weissman J.S."/>
            <person name="O'Shea E.K."/>
        </authorList>
    </citation>
    <scope>SUBCELLULAR LOCATION [LARGE SCALE ANALYSIS]</scope>
</reference>
<reference key="10">
    <citation type="journal article" date="2003" name="Nature">
        <title>Global analysis of protein expression in yeast.</title>
        <authorList>
            <person name="Ghaemmaghami S."/>
            <person name="Huh W.-K."/>
            <person name="Bower K."/>
            <person name="Howson R.W."/>
            <person name="Belle A."/>
            <person name="Dephoure N."/>
            <person name="O'Shea E.K."/>
            <person name="Weissman J.S."/>
        </authorList>
    </citation>
    <scope>LEVEL OF PROTEIN EXPRESSION [LARGE SCALE ANALYSIS]</scope>
</reference>
<reference key="11">
    <citation type="journal article" date="2003" name="Proc. Natl. Acad. Sci. U.S.A.">
        <title>Determination of the membrane topology of Ost4p and its subunit interactions in the oligosaccharyltransferase complex in Saccharomyces cerevisiae.</title>
        <authorList>
            <person name="Kim H."/>
            <person name="Yan Q."/>
            <person name="Von Heijne G."/>
            <person name="Caputo G.A."/>
            <person name="Lennarz W.J."/>
        </authorList>
    </citation>
    <scope>TOPOLOGY</scope>
    <scope>MUTAGENESIS OF MET-18; MET-19; THR-20; LEU-21; VAL-23 AND ILE-24</scope>
</reference>
<reference key="12">
    <citation type="journal article" date="2005" name="FEBS Lett.">
        <title>Yeast oligosaccharyltransferase consists of two functionally distinct sub-complexes, specified by either the Ost3p or Ost6p subunit.</title>
        <authorList>
            <person name="Schwarz M."/>
            <person name="Knauer R."/>
            <person name="Lehle L."/>
        </authorList>
    </citation>
    <scope>COMPOSITION OF THE OLIGOSACCHARYL TRANSFERASE COMPLEXES</scope>
</reference>
<reference key="13">
    <citation type="journal article" date="2005" name="Glycobiology">
        <title>The 3.4-kDa Ost4 protein is required for the assembly of two distinct oligosaccharyltransferase complexes in yeast.</title>
        <authorList>
            <person name="Spirig U."/>
            <person name="Bodmer D."/>
            <person name="Wacker M."/>
            <person name="Burda P."/>
            <person name="Aebi M."/>
        </authorList>
    </citation>
    <scope>COMPOSITION OF THE OLIGOSACCHARYL TRANSFERASE COMPLEXES</scope>
</reference>
<reference key="14">
    <citation type="journal article" date="2005" name="Glycobiology">
        <title>Two oligosaccharyl transferase complexes exist in yeast and associate with two different translocons.</title>
        <authorList>
            <person name="Yan A."/>
            <person name="Lennarz W.J."/>
        </authorList>
    </citation>
    <scope>COMPOSITION OF THE OLIGOSACCHARYL TRANSFERASE COMPLEXES</scope>
</reference>
<reference key="15">
    <citation type="journal article" date="2005" name="J. Biol. Chem.">
        <title>Subunits of the translocon interact with components of the oligosaccharyl transferase complex.</title>
        <authorList>
            <person name="Chavan M."/>
            <person name="Yan A."/>
            <person name="Lennarz W.J."/>
        </authorList>
    </citation>
    <scope>INTERACTION WITH SEC61; SBH1 AND SSS1</scope>
</reference>
<reference key="16">
    <citation type="journal article" date="2005" name="Proc. Natl. Acad. Sci. U.S.A.">
        <title>Studies of yeast oligosaccharyl transferase subunits using the split-ubiquitin system: topological features and in vivo interactions.</title>
        <authorList>
            <person name="Yan A."/>
            <person name="Wu E."/>
            <person name="Lennarz W.J."/>
        </authorList>
    </citation>
    <scope>INTERACTION WITH OST2; OST3; OST5; OST6; STT3; WBP1 AND SWP1</scope>
</reference>
<reference key="17">
    <citation type="journal article" date="2004" name="Proc. Natl. Acad. Sci. U.S.A.">
        <title>Structural basis for the function of a minimembrane protein subunit of yeast oligosaccharyltransferase.</title>
        <authorList>
            <person name="Zubkov S."/>
            <person name="Lennarz W.J."/>
            <person name="Mohanty S."/>
        </authorList>
    </citation>
    <scope>STRUCTURE BY NMR</scope>
    <scope>TRANSMEMBRANE DOMAIN</scope>
</reference>
<reference key="18">
    <citation type="journal article" date="2018" name="Nature">
        <title>The atomic structure of a eukaryotic oligosaccharyltransferase complex.</title>
        <authorList>
            <person name="Bai L."/>
            <person name="Wang T."/>
            <person name="Zhao G."/>
            <person name="Kovach A."/>
            <person name="Li H."/>
        </authorList>
    </citation>
    <scope>STRUCTURE BY ELECTRON MICROSCOPY (3.50 ANGSTROMS)</scope>
</reference>
<reference key="19">
    <citation type="journal article" date="2018" name="Science">
        <title>Structure of the yeast oligosaccharyltransferase complex gives insight into eukaryotic N-glycosylation.</title>
        <authorList>
            <person name="Wild R."/>
            <person name="Kowal J."/>
            <person name="Eyring J."/>
            <person name="Ngwa E.M."/>
            <person name="Aebi M."/>
            <person name="Locher K.P."/>
        </authorList>
    </citation>
    <scope>STRUCTURE BY ELECTRON MICROSCOPY (3.30 ANGSTROMS)</scope>
</reference>
<gene>
    <name type="primary">OST4</name>
    <name type="ordered locus">YDL232W</name>
</gene>
<accession>Q99380</accession>
<accession>D6VRC4</accession>
<sequence length="36" mass="3985">MISDEQLNSLAITFGIVMMTLIVIYHAVDSTMSPKN</sequence>
<proteinExistence type="evidence at protein level"/>
<name>OST4_YEAST</name>
<organism>
    <name type="scientific">Saccharomyces cerevisiae (strain ATCC 204508 / S288c)</name>
    <name type="common">Baker's yeast</name>
    <dbReference type="NCBI Taxonomy" id="559292"/>
    <lineage>
        <taxon>Eukaryota</taxon>
        <taxon>Fungi</taxon>
        <taxon>Dikarya</taxon>
        <taxon>Ascomycota</taxon>
        <taxon>Saccharomycotina</taxon>
        <taxon>Saccharomycetes</taxon>
        <taxon>Saccharomycetales</taxon>
        <taxon>Saccharomycetaceae</taxon>
        <taxon>Saccharomyces</taxon>
    </lineage>
</organism>
<comment type="function">
    <text evidence="2">Subunit of the oligosaccharyl transferase (OST) complex that catalyzes the initial transfer of a defined glycan (Glc(3)Man(9)GlcNAc(2) in eukaryotes) from the lipid carrier dolichol-pyrophosphate to an asparagine residue within an Asn-X-Ser/Thr consensus motif in nascent polypeptide chains, the first step in protein N-glycosylation. N-glycosylation occurs cotranslationally and the complex associates with the Sec61 complex at the channel-forming translocon complex that mediates protein translocation across the endoplasmic reticulum (ER). All subunits are required for a maximal enzyme activity.</text>
</comment>
<comment type="pathway">
    <text evidence="14">Protein modification; protein glycosylation.</text>
</comment>
<comment type="subunit">
    <text evidence="1 6 7 8 9 10 11 12">Component of the oligosaccharyltransferase (OST) complex, which appears to exist in two assemblies comprising OST1, OST2, OST4, OST5, STT3, SWP1, WPB1, and either OST3 or OST6 (PubMed:10677492, PubMed:15831493, PubMed:15886282, PubMed:16096345, PubMed:16297388, PubMed:29301962, PubMed:8175708, PubMed:9405463). OST assembly occurs through the formation of 3 subcomplexes. Subcomplex 1 contains OST1 and OST5, subcomplex 2 contains STT3, OST3, and OST4, and subcomplex 3 contains OST2, WBP1, and SWP1 (PubMed:29301962). Interacts with SEC61, SBH1 and SSS1 (PubMed:15831493).</text>
</comment>
<comment type="interaction">
    <interactant intactId="EBI-12689">
        <id>Q99380</id>
    </interactant>
    <interactant intactId="EBI-12680">
        <id>P48439</id>
        <label>OST3</label>
    </interactant>
    <organismsDiffer>false</organismsDiffer>
    <experiments>3</experiments>
</comment>
<comment type="interaction">
    <interactant intactId="EBI-12689">
        <id>Q99380</id>
    </interactant>
    <interactant intactId="EBI-16410">
        <id>P52870</id>
        <label>SBH1</label>
    </interactant>
    <organismsDiffer>false</organismsDiffer>
    <experiments>2</experiments>
</comment>
<comment type="interaction">
    <interactant intactId="EBI-12689">
        <id>Q99380</id>
    </interactant>
    <interactant intactId="EBI-16400">
        <id>P32915</id>
        <label>SEC61</label>
    </interactant>
    <organismsDiffer>false</organismsDiffer>
    <experiments>2</experiments>
</comment>
<comment type="interaction">
    <interactant intactId="EBI-12689">
        <id>Q99380</id>
    </interactant>
    <interactant intactId="EBI-16406">
        <id>P35179</id>
        <label>SSS1</label>
    </interactant>
    <organismsDiffer>false</organismsDiffer>
    <experiments>2</experiments>
</comment>
<comment type="interaction">
    <interactant intactId="EBI-12689">
        <id>Q99380</id>
    </interactant>
    <interactant intactId="EBI-18447">
        <id>P39007</id>
        <label>STT3</label>
    </interactant>
    <organismsDiffer>false</organismsDiffer>
    <experiments>7</experiments>
</comment>
<comment type="interaction">
    <interactant intactId="EBI-12689">
        <id>Q99380</id>
    </interactant>
    <interactant intactId="EBI-12666">
        <id>Q02795</id>
        <label>SWP1</label>
    </interactant>
    <organismsDiffer>false</organismsDiffer>
    <experiments>7</experiments>
</comment>
<comment type="interaction">
    <interactant intactId="EBI-12689">
        <id>Q99380</id>
    </interactant>
    <interactant intactId="EBI-12658">
        <id>P33767</id>
        <label>WBP1</label>
    </interactant>
    <organismsDiffer>false</organismsDiffer>
    <experiments>7</experiments>
</comment>
<comment type="subcellular location">
    <subcellularLocation>
        <location evidence="4">Endoplasmic reticulum membrane</location>
        <topology evidence="10">Single-pass type III membrane protein</topology>
    </subcellularLocation>
</comment>
<comment type="miscellaneous">
    <text evidence="5">Present with 2430 molecules/cell in log phase SD medium.</text>
</comment>
<comment type="similarity">
    <text evidence="13">Belongs to the OST4 family.</text>
</comment>
<protein>
    <recommendedName>
        <fullName>Dolichyl-diphosphooligosaccharide--protein glycosyltransferase subunit OST4</fullName>
        <shortName>Oligosaccharyl transferase subunit OST4</shortName>
    </recommendedName>
    <alternativeName>
        <fullName>Oligosaccharyl transferase 4 kDa subunit</fullName>
        <shortName>OTase 4 kDa subunit</shortName>
    </alternativeName>
</protein>
<dbReference type="EMBL" id="L42519">
    <property type="protein sequence ID" value="AAB06797.1"/>
    <property type="molecule type" value="Genomic_DNA"/>
</dbReference>
<dbReference type="EMBL" id="Z74280">
    <property type="protein sequence ID" value="CAA98811.1"/>
    <property type="molecule type" value="Genomic_DNA"/>
</dbReference>
<dbReference type="EMBL" id="BK006938">
    <property type="protein sequence ID" value="DAA11634.1"/>
    <property type="molecule type" value="Genomic_DNA"/>
</dbReference>
<dbReference type="PIR" id="S67795">
    <property type="entry name" value="S67795"/>
</dbReference>
<dbReference type="RefSeq" id="NP_010049.1">
    <property type="nucleotide sequence ID" value="NM_001180292.1"/>
</dbReference>
<dbReference type="PDB" id="1RKL">
    <property type="method" value="NMR"/>
    <property type="chains" value="A=1-36"/>
</dbReference>
<dbReference type="PDB" id="6C26">
    <property type="method" value="EM"/>
    <property type="resolution" value="3.50 A"/>
    <property type="chains" value="4=1-36"/>
</dbReference>
<dbReference type="PDB" id="6EZN">
    <property type="method" value="EM"/>
    <property type="resolution" value="3.30 A"/>
    <property type="chains" value="D=1-36"/>
</dbReference>
<dbReference type="PDB" id="6XCR">
    <property type="method" value="NMR"/>
    <property type="chains" value="A=1-36"/>
</dbReference>
<dbReference type="PDB" id="6XCU">
    <property type="method" value="NMR"/>
    <property type="chains" value="A=1-36"/>
</dbReference>
<dbReference type="PDB" id="7OCI">
    <property type="method" value="EM"/>
    <property type="resolution" value="3.46 A"/>
    <property type="chains" value="D=1-36"/>
</dbReference>
<dbReference type="PDB" id="8AGB">
    <property type="method" value="EM"/>
    <property type="resolution" value="3.00 A"/>
    <property type="chains" value="B=1-36"/>
</dbReference>
<dbReference type="PDB" id="8AGC">
    <property type="method" value="EM"/>
    <property type="resolution" value="3.10 A"/>
    <property type="chains" value="B=1-36"/>
</dbReference>
<dbReference type="PDB" id="8AGE">
    <property type="method" value="EM"/>
    <property type="resolution" value="2.80 A"/>
    <property type="chains" value="B=1-36"/>
</dbReference>
<dbReference type="PDBsum" id="1RKL"/>
<dbReference type="PDBsum" id="6C26"/>
<dbReference type="PDBsum" id="6EZN"/>
<dbReference type="PDBsum" id="6XCR"/>
<dbReference type="PDBsum" id="6XCU"/>
<dbReference type="PDBsum" id="7OCI"/>
<dbReference type="PDBsum" id="8AGB"/>
<dbReference type="PDBsum" id="8AGC"/>
<dbReference type="PDBsum" id="8AGE"/>
<dbReference type="BMRB" id="Q99380"/>
<dbReference type="EMDB" id="EMD-12808"/>
<dbReference type="EMDB" id="EMD-15419"/>
<dbReference type="EMDB" id="EMD-4161"/>
<dbReference type="EMDB" id="EMD-7336"/>
<dbReference type="SMR" id="Q99380"/>
<dbReference type="BioGRID" id="31879">
    <property type="interactions" value="693"/>
</dbReference>
<dbReference type="ComplexPortal" id="CPX-1638">
    <property type="entry name" value="Oligosaccharyltransferase complex, OST6 variant"/>
</dbReference>
<dbReference type="ComplexPortal" id="CPX-1639">
    <property type="entry name" value="Oligosaccharyltransferase complex, OST3 variant"/>
</dbReference>
<dbReference type="DIP" id="DIP-2457N"/>
<dbReference type="FunCoup" id="Q99380">
    <property type="interactions" value="167"/>
</dbReference>
<dbReference type="IntAct" id="Q99380">
    <property type="interactions" value="15"/>
</dbReference>
<dbReference type="MINT" id="Q99380"/>
<dbReference type="STRING" id="4932.YDL232W"/>
<dbReference type="TCDB" id="9.B.142.3.14">
    <property type="family name" value="the integral membrane glycosyltransferase family 39 (gt39) family"/>
</dbReference>
<dbReference type="PaxDb" id="4932-YDL232W"/>
<dbReference type="PeptideAtlas" id="Q99380"/>
<dbReference type="EnsemblFungi" id="YDL232W_mRNA">
    <property type="protein sequence ID" value="YDL232W"/>
    <property type="gene ID" value="YDL232W"/>
</dbReference>
<dbReference type="GeneID" id="851366"/>
<dbReference type="KEGG" id="sce:YDL232W"/>
<dbReference type="AGR" id="SGD:S000002391"/>
<dbReference type="SGD" id="S000002391">
    <property type="gene designation" value="OST4"/>
</dbReference>
<dbReference type="VEuPathDB" id="FungiDB:YDL232W"/>
<dbReference type="eggNOG" id="ENOG502SF94">
    <property type="taxonomic scope" value="Eukaryota"/>
</dbReference>
<dbReference type="HOGENOM" id="CLU_160806_3_0_1"/>
<dbReference type="InParanoid" id="Q99380"/>
<dbReference type="OrthoDB" id="2124077at2759"/>
<dbReference type="BioCyc" id="MetaCyc:YDL232W-MONOMER"/>
<dbReference type="BioCyc" id="YEAST:YDL232W-MONOMER"/>
<dbReference type="BRENDA" id="2.4.99.18">
    <property type="organism ID" value="984"/>
</dbReference>
<dbReference type="UniPathway" id="UPA00378"/>
<dbReference type="BioGRID-ORCS" id="851366">
    <property type="hits" value="9 hits in 10 CRISPR screens"/>
</dbReference>
<dbReference type="EvolutionaryTrace" id="Q99380"/>
<dbReference type="PRO" id="PR:Q99380"/>
<dbReference type="Proteomes" id="UP000002311">
    <property type="component" value="Chromosome IV"/>
</dbReference>
<dbReference type="GO" id="GO:0005789">
    <property type="term" value="C:endoplasmic reticulum membrane"/>
    <property type="evidence" value="ECO:0000315"/>
    <property type="project" value="SGD"/>
</dbReference>
<dbReference type="GO" id="GO:0005739">
    <property type="term" value="C:mitochondrion"/>
    <property type="evidence" value="ECO:0007005"/>
    <property type="project" value="SGD"/>
</dbReference>
<dbReference type="GO" id="GO:0008250">
    <property type="term" value="C:oligosaccharyltransferase complex"/>
    <property type="evidence" value="ECO:0000314"/>
    <property type="project" value="UniProtKB"/>
</dbReference>
<dbReference type="GO" id="GO:0030674">
    <property type="term" value="F:protein-macromolecule adaptor activity"/>
    <property type="evidence" value="ECO:0000314"/>
    <property type="project" value="SGD"/>
</dbReference>
<dbReference type="GO" id="GO:0006487">
    <property type="term" value="P:protein N-linked glycosylation"/>
    <property type="evidence" value="ECO:0000315"/>
    <property type="project" value="UniProtKB"/>
</dbReference>
<dbReference type="InterPro" id="IPR018943">
    <property type="entry name" value="Oligosaccaryltransferase"/>
</dbReference>
<dbReference type="InterPro" id="IPR036330">
    <property type="entry name" value="Ost4p_sf"/>
</dbReference>
<dbReference type="Pfam" id="PF10215">
    <property type="entry name" value="Ost4"/>
    <property type="match status" value="1"/>
</dbReference>
<dbReference type="SUPFAM" id="SSF103464">
    <property type="entry name" value="Oligosaccharyltransferase subunit ost4p"/>
    <property type="match status" value="1"/>
</dbReference>
<keyword id="KW-0002">3D-structure</keyword>
<keyword id="KW-0256">Endoplasmic reticulum</keyword>
<keyword id="KW-0472">Membrane</keyword>
<keyword id="KW-1185">Reference proteome</keyword>
<keyword id="KW-0735">Signal-anchor</keyword>
<keyword id="KW-0812">Transmembrane</keyword>
<keyword id="KW-1133">Transmembrane helix</keyword>
<feature type="chain" id="PRO_0000058093" description="Dolichyl-diphosphooligosaccharide--protein glycosyltransferase subunit OST4">
    <location>
        <begin position="1"/>
        <end position="36"/>
    </location>
</feature>
<feature type="topological domain" description="Lumenal" evidence="3">
    <location>
        <begin position="1"/>
        <end position="9"/>
    </location>
</feature>
<feature type="transmembrane region" description="Helical" evidence="3">
    <location>
        <begin position="10"/>
        <end position="28"/>
    </location>
</feature>
<feature type="topological domain" description="Cytoplasmic" evidence="3">
    <location>
        <begin position="29"/>
        <end position="36"/>
    </location>
</feature>
<feature type="mutagenesis site" description="Severe growth defect; abolishes interaction with OST3 and STT3." evidence="1 3">
    <original>M</original>
    <variation>K</variation>
    <location>
        <position position="18"/>
    </location>
</feature>
<feature type="mutagenesis site" description="No effect on interaction between OST3 and STT3." evidence="1 3">
    <original>M</original>
    <variation>L</variation>
    <location>
        <position position="18"/>
    </location>
</feature>
<feature type="mutagenesis site" description="Severe growth defect; abolishes interaction with OST3." evidence="1 3">
    <original>M</original>
    <variation>K</variation>
    <location>
        <position position="19"/>
    </location>
</feature>
<feature type="mutagenesis site" description="Disrupts interaction between OST3 and STT3." evidence="1 3">
    <original>M</original>
    <variation>L</variation>
    <location>
        <position position="19"/>
    </location>
</feature>
<feature type="mutagenesis site" description="Severe growth defect." evidence="1 3">
    <original>T</original>
    <variation>D</variation>
    <location>
        <position position="20"/>
    </location>
</feature>
<feature type="mutagenesis site" description="Severe growth defect; abolishes interaction with OST3; disrupts interaction between OST3 and STT3." evidence="1 3">
    <original>T</original>
    <variation>K</variation>
    <location>
        <position position="20"/>
    </location>
</feature>
<feature type="mutagenesis site" description="Abolishes interaction with OST3 and STT3; disrupts interaction between OST3 and STT3." evidence="1 3">
    <original>L</original>
    <variation>K</variation>
    <location>
        <position position="21"/>
    </location>
</feature>
<feature type="mutagenesis site" description="Severe growth defect." evidence="1 3">
    <original>V</original>
    <variation>D</variation>
    <location>
        <position position="23"/>
    </location>
</feature>
<feature type="mutagenesis site" description="Severe growth defect; abolishes interaction with OST3; disrupts interaction between OST3 and STT3." evidence="1 3">
    <original>V</original>
    <variation>K</variation>
    <location>
        <position position="23"/>
    </location>
</feature>
<feature type="mutagenesis site" description="Severe growth defect." evidence="1 3">
    <original>I</original>
    <variation>D</variation>
    <location>
        <position position="24"/>
    </location>
</feature>
<feature type="mutagenesis site" description="Disrupts interaction between OST3 and STT3." evidence="1 3">
    <original>I</original>
    <variation>K</variation>
    <location>
        <position position="24"/>
    </location>
</feature>
<feature type="mutagenesis site" description="Severe growth defect." evidence="1">
    <original>Y</original>
    <variation>D</variation>
    <location>
        <position position="25"/>
    </location>
</feature>
<feature type="helix" evidence="15">
    <location>
        <begin position="4"/>
        <end position="31"/>
    </location>
</feature>
<evidence type="ECO:0000269" key="1">
    <source>
    </source>
</evidence>
<evidence type="ECO:0000269" key="2">
    <source>
    </source>
</evidence>
<evidence type="ECO:0000269" key="3">
    <source>
    </source>
</evidence>
<evidence type="ECO:0000269" key="4">
    <source>
    </source>
</evidence>
<evidence type="ECO:0000269" key="5">
    <source>
    </source>
</evidence>
<evidence type="ECO:0000269" key="6">
    <source>
    </source>
</evidence>
<evidence type="ECO:0000269" key="7">
    <source>
    </source>
</evidence>
<evidence type="ECO:0000269" key="8">
    <source>
    </source>
</evidence>
<evidence type="ECO:0000269" key="9">
    <source>
    </source>
</evidence>
<evidence type="ECO:0000269" key="10">
    <source>
    </source>
</evidence>
<evidence type="ECO:0000269" key="11">
    <source>
    </source>
</evidence>
<evidence type="ECO:0000269" key="12">
    <source>
    </source>
</evidence>
<evidence type="ECO:0000305" key="13"/>
<evidence type="ECO:0000305" key="14">
    <source>
    </source>
</evidence>
<evidence type="ECO:0007829" key="15">
    <source>
        <dbReference type="PDB" id="8AGE"/>
    </source>
</evidence>